<proteinExistence type="inferred from homology"/>
<evidence type="ECO:0000255" key="1">
    <source>
        <dbReference type="HAMAP-Rule" id="MF_00636"/>
    </source>
</evidence>
<keyword id="KW-0067">ATP-binding</keyword>
<keyword id="KW-0342">GTP-binding</keyword>
<keyword id="KW-0547">Nucleotide-binding</keyword>
<sequence length="297" mass="33176">MRIVLITGISGSGKSVALNALEDAGYYCVDNLPPHVLPELARYLAHEGQNRLAVAIDARSSASLDEMPGLIRALSHEHDVRVLFLNASTQALIQRFSETRRRHPLSGSPSHDADVGLLVSLEEAIERERELVAPLAEFGHQIDTSNLRANVLRTWVKRFIEQKNDDLVLMFESFGFKRGVPLDADFMFDVRALPNPYYDHELRPLTGLDQPVVAFLDALPVVHQMLDDIETFLVKWLPHFREDNRSYLTVAIGCTGGQHRSVFLAETLAARLSRQASVIVRHRDAPVAVDASSRLVT</sequence>
<feature type="chain" id="PRO_1000056810" description="Nucleotide-binding protein BMA10229_A1510">
    <location>
        <begin position="1"/>
        <end position="297"/>
    </location>
</feature>
<feature type="binding site" evidence="1">
    <location>
        <begin position="8"/>
        <end position="15"/>
    </location>
    <ligand>
        <name>ATP</name>
        <dbReference type="ChEBI" id="CHEBI:30616"/>
    </ligand>
</feature>
<feature type="binding site" evidence="1">
    <location>
        <begin position="57"/>
        <end position="60"/>
    </location>
    <ligand>
        <name>GTP</name>
        <dbReference type="ChEBI" id="CHEBI:37565"/>
    </ligand>
</feature>
<reference key="1">
    <citation type="journal article" date="2010" name="Genome Biol. Evol.">
        <title>Continuing evolution of Burkholderia mallei through genome reduction and large-scale rearrangements.</title>
        <authorList>
            <person name="Losada L."/>
            <person name="Ronning C.M."/>
            <person name="DeShazer D."/>
            <person name="Woods D."/>
            <person name="Fedorova N."/>
            <person name="Kim H.S."/>
            <person name="Shabalina S.A."/>
            <person name="Pearson T.R."/>
            <person name="Brinkac L."/>
            <person name="Tan P."/>
            <person name="Nandi T."/>
            <person name="Crabtree J."/>
            <person name="Badger J."/>
            <person name="Beckstrom-Sternberg S."/>
            <person name="Saqib M."/>
            <person name="Schutzer S.E."/>
            <person name="Keim P."/>
            <person name="Nierman W.C."/>
        </authorList>
    </citation>
    <scope>NUCLEOTIDE SEQUENCE [LARGE SCALE GENOMIC DNA]</scope>
    <source>
        <strain>NCTC 10229</strain>
    </source>
</reference>
<accession>A2S6C3</accession>
<protein>
    <recommendedName>
        <fullName evidence="1">Nucleotide-binding protein BMA10229_A1510</fullName>
    </recommendedName>
</protein>
<gene>
    <name type="ordered locus">BMA10229_A1510</name>
</gene>
<comment type="function">
    <text evidence="1">Displays ATPase and GTPase activities.</text>
</comment>
<comment type="similarity">
    <text evidence="1">Belongs to the RapZ-like family.</text>
</comment>
<name>Y3810_BURM9</name>
<organism>
    <name type="scientific">Burkholderia mallei (strain NCTC 10229)</name>
    <dbReference type="NCBI Taxonomy" id="412022"/>
    <lineage>
        <taxon>Bacteria</taxon>
        <taxon>Pseudomonadati</taxon>
        <taxon>Pseudomonadota</taxon>
        <taxon>Betaproteobacteria</taxon>
        <taxon>Burkholderiales</taxon>
        <taxon>Burkholderiaceae</taxon>
        <taxon>Burkholderia</taxon>
        <taxon>pseudomallei group</taxon>
    </lineage>
</organism>
<dbReference type="EMBL" id="CP000546">
    <property type="protein sequence ID" value="ABN03168.1"/>
    <property type="molecule type" value="Genomic_DNA"/>
</dbReference>
<dbReference type="SMR" id="A2S6C3"/>
<dbReference type="KEGG" id="bml:BMA10229_A1510"/>
<dbReference type="HOGENOM" id="CLU_059558_1_1_4"/>
<dbReference type="Proteomes" id="UP000002283">
    <property type="component" value="Chromosome I"/>
</dbReference>
<dbReference type="GO" id="GO:0005524">
    <property type="term" value="F:ATP binding"/>
    <property type="evidence" value="ECO:0007669"/>
    <property type="project" value="UniProtKB-UniRule"/>
</dbReference>
<dbReference type="GO" id="GO:0005525">
    <property type="term" value="F:GTP binding"/>
    <property type="evidence" value="ECO:0007669"/>
    <property type="project" value="UniProtKB-UniRule"/>
</dbReference>
<dbReference type="Gene3D" id="3.40.50.300">
    <property type="entry name" value="P-loop containing nucleotide triphosphate hydrolases"/>
    <property type="match status" value="1"/>
</dbReference>
<dbReference type="HAMAP" id="MF_00636">
    <property type="entry name" value="RapZ_like"/>
    <property type="match status" value="1"/>
</dbReference>
<dbReference type="InterPro" id="IPR027417">
    <property type="entry name" value="P-loop_NTPase"/>
</dbReference>
<dbReference type="InterPro" id="IPR005337">
    <property type="entry name" value="RapZ-like"/>
</dbReference>
<dbReference type="InterPro" id="IPR053930">
    <property type="entry name" value="RapZ-like_N"/>
</dbReference>
<dbReference type="InterPro" id="IPR053931">
    <property type="entry name" value="RapZ_C"/>
</dbReference>
<dbReference type="NCBIfam" id="NF003828">
    <property type="entry name" value="PRK05416.1"/>
    <property type="match status" value="1"/>
</dbReference>
<dbReference type="PANTHER" id="PTHR30448">
    <property type="entry name" value="RNASE ADAPTER PROTEIN RAPZ"/>
    <property type="match status" value="1"/>
</dbReference>
<dbReference type="PANTHER" id="PTHR30448:SF0">
    <property type="entry name" value="RNASE ADAPTER PROTEIN RAPZ"/>
    <property type="match status" value="1"/>
</dbReference>
<dbReference type="Pfam" id="PF22740">
    <property type="entry name" value="PapZ_C"/>
    <property type="match status" value="1"/>
</dbReference>
<dbReference type="Pfam" id="PF03668">
    <property type="entry name" value="RapZ-like_N"/>
    <property type="match status" value="1"/>
</dbReference>
<dbReference type="PIRSF" id="PIRSF005052">
    <property type="entry name" value="P-loopkin"/>
    <property type="match status" value="1"/>
</dbReference>
<dbReference type="SUPFAM" id="SSF52540">
    <property type="entry name" value="P-loop containing nucleoside triphosphate hydrolases"/>
    <property type="match status" value="1"/>
</dbReference>